<dbReference type="EMBL" id="BC082223">
    <property type="protein sequence ID" value="AAH82223.1"/>
    <property type="status" value="ALT_INIT"/>
    <property type="molecule type" value="mRNA"/>
</dbReference>
<dbReference type="RefSeq" id="XP_018117688.1">
    <property type="nucleotide sequence ID" value="XM_018262199.1"/>
</dbReference>
<dbReference type="AGR" id="Xenbase:XB-GENE-6254843"/>
<dbReference type="Xenbase" id="XB-GENE-6254843">
    <property type="gene designation" value="mpv17.L"/>
</dbReference>
<dbReference type="OrthoDB" id="430207at2759"/>
<dbReference type="Proteomes" id="UP000186698">
    <property type="component" value="Unplaced"/>
</dbReference>
<dbReference type="Bgee" id="446961">
    <property type="expression patterns" value="Expressed in testis and 19 other cell types or tissues"/>
</dbReference>
<dbReference type="GO" id="GO:0005737">
    <property type="term" value="C:cytoplasm"/>
    <property type="evidence" value="ECO:0000318"/>
    <property type="project" value="GO_Central"/>
</dbReference>
<dbReference type="GO" id="GO:0005743">
    <property type="term" value="C:mitochondrial inner membrane"/>
    <property type="evidence" value="ECO:0007669"/>
    <property type="project" value="UniProtKB-SubCell"/>
</dbReference>
<dbReference type="GO" id="GO:0005739">
    <property type="term" value="C:mitochondrion"/>
    <property type="evidence" value="ECO:0000318"/>
    <property type="project" value="GO_Central"/>
</dbReference>
<dbReference type="GO" id="GO:0015267">
    <property type="term" value="F:channel activity"/>
    <property type="evidence" value="ECO:0000318"/>
    <property type="project" value="GO_Central"/>
</dbReference>
<dbReference type="GO" id="GO:1901858">
    <property type="term" value="P:regulation of mitochondrial DNA metabolic process"/>
    <property type="evidence" value="ECO:0000318"/>
    <property type="project" value="GO_Central"/>
</dbReference>
<dbReference type="InterPro" id="IPR007248">
    <property type="entry name" value="Mpv17_PMP22"/>
</dbReference>
<dbReference type="PANTHER" id="PTHR11266">
    <property type="entry name" value="PEROXISOMAL MEMBRANE PROTEIN 2, PXMP2 MPV17"/>
    <property type="match status" value="1"/>
</dbReference>
<dbReference type="PANTHER" id="PTHR11266:SF17">
    <property type="entry name" value="PROTEIN MPV17"/>
    <property type="match status" value="1"/>
</dbReference>
<dbReference type="Pfam" id="PF04117">
    <property type="entry name" value="Mpv17_PMP22"/>
    <property type="match status" value="1"/>
</dbReference>
<feature type="chain" id="PRO_0000234401" description="Mitochondrial inner membrane protein Mpv17">
    <location>
        <begin position="1"/>
        <end position="177"/>
    </location>
</feature>
<feature type="transmembrane region" description="Helical" evidence="3">
    <location>
        <begin position="11"/>
        <end position="31"/>
    </location>
</feature>
<feature type="transmembrane region" description="Helical" evidence="3">
    <location>
        <begin position="55"/>
        <end position="75"/>
    </location>
</feature>
<feature type="transmembrane region" description="Helical" evidence="3">
    <location>
        <begin position="95"/>
        <end position="115"/>
    </location>
</feature>
<feature type="transmembrane region" description="Helical" evidence="3">
    <location>
        <begin position="132"/>
        <end position="152"/>
    </location>
</feature>
<feature type="site" description="Determines ion selectivity" evidence="1">
    <location>
        <position position="93"/>
    </location>
</feature>
<accession>Q66GV0</accession>
<organism evidence="5">
    <name type="scientific">Xenopus laevis</name>
    <name type="common">African clawed frog</name>
    <dbReference type="NCBI Taxonomy" id="8355"/>
    <lineage>
        <taxon>Eukaryota</taxon>
        <taxon>Metazoa</taxon>
        <taxon>Chordata</taxon>
        <taxon>Craniata</taxon>
        <taxon>Vertebrata</taxon>
        <taxon>Euteleostomi</taxon>
        <taxon>Amphibia</taxon>
        <taxon>Batrachia</taxon>
        <taxon>Anura</taxon>
        <taxon>Pipoidea</taxon>
        <taxon>Pipidae</taxon>
        <taxon>Xenopodinae</taxon>
        <taxon>Xenopus</taxon>
        <taxon>Xenopus</taxon>
    </lineage>
</organism>
<gene>
    <name type="primary">mpv17</name>
</gene>
<reference key="1">
    <citation type="submission" date="2004-09" db="EMBL/GenBank/DDBJ databases">
        <authorList>
            <consortium name="NIH - Xenopus Gene Collection (XGC) project"/>
        </authorList>
    </citation>
    <scope>NUCLEOTIDE SEQUENCE [LARGE SCALE MRNA]</scope>
    <source>
        <tissue>Testis</tissue>
    </source>
</reference>
<protein>
    <recommendedName>
        <fullName evidence="4">Mitochondrial inner membrane protein Mpv17</fullName>
    </recommendedName>
    <alternativeName>
        <fullName evidence="4">Protein Mpv17</fullName>
    </alternativeName>
</protein>
<sequence length="177" mass="19748">MAGLWRAYQRLLGAHPWKVQIVTAGSLVGVGDVISQQLLERKGLKGHSIERTVKMMGIGFCFVGPVVGGWYKILDRIIPGSGKPVALKKMLLDQVAFAPCFLGCFLSIASALNGLSGEQIWGKLKRDYKDALITNYYIWPAVQVANFYFIPLYHRLAVVQFVAIIWNSYLSWKANKS</sequence>
<keyword id="KW-0472">Membrane</keyword>
<keyword id="KW-0496">Mitochondrion</keyword>
<keyword id="KW-0999">Mitochondrion inner membrane</keyword>
<keyword id="KW-1185">Reference proteome</keyword>
<keyword id="KW-0812">Transmembrane</keyword>
<keyword id="KW-1133">Transmembrane helix</keyword>
<evidence type="ECO:0000250" key="1">
    <source>
        <dbReference type="UniProtKB" id="P39210"/>
    </source>
</evidence>
<evidence type="ECO:0000250" key="2">
    <source>
        <dbReference type="UniProtKB" id="Q5TZ51"/>
    </source>
</evidence>
<evidence type="ECO:0000255" key="3"/>
<evidence type="ECO:0000305" key="4"/>
<evidence type="ECO:0000312" key="5">
    <source>
        <dbReference type="Proteomes" id="UP000186698"/>
    </source>
</evidence>
<comment type="function">
    <text evidence="1 2">Involved in mitochondrial homeostasis, and control of oxidative phosphorylation and mitochondrial DNA (mtDNA) maintenance (By similarity). Non-selective channel that modulates the membrane potential under normal conditions and oxidative stress (By similarity).</text>
</comment>
<comment type="subcellular location">
    <subcellularLocation>
        <location evidence="2">Mitochondrion inner membrane</location>
        <topology evidence="2">Multi-pass membrane protein</topology>
    </subcellularLocation>
</comment>
<comment type="similarity">
    <text evidence="4">Belongs to the peroxisomal membrane protein PXMP2/4 family.</text>
</comment>
<comment type="sequence caution" evidence="4">
    <conflict type="erroneous initiation">
        <sequence resource="EMBL-CDS" id="AAH82223"/>
    </conflict>
</comment>
<proteinExistence type="evidence at transcript level"/>
<name>MPV17_XENLA</name>